<comment type="similarity">
    <text evidence="1">Belongs to the bacterial ribosomal protein bL32 family.</text>
</comment>
<evidence type="ECO:0000255" key="1">
    <source>
        <dbReference type="HAMAP-Rule" id="MF_00340"/>
    </source>
</evidence>
<evidence type="ECO:0000305" key="2"/>
<sequence length="57" mass="6485">MAVPKRRTSKTRKNKRRTHFKISVPGMTECPNCGEYKLSHRVCKNCGSYNGEEVAAK</sequence>
<gene>
    <name evidence="1" type="primary">rpmF</name>
    <name type="ordered locus">SAR1101</name>
</gene>
<keyword id="KW-0687">Ribonucleoprotein</keyword>
<keyword id="KW-0689">Ribosomal protein</keyword>
<organism>
    <name type="scientific">Staphylococcus aureus (strain MRSA252)</name>
    <dbReference type="NCBI Taxonomy" id="282458"/>
    <lineage>
        <taxon>Bacteria</taxon>
        <taxon>Bacillati</taxon>
        <taxon>Bacillota</taxon>
        <taxon>Bacilli</taxon>
        <taxon>Bacillales</taxon>
        <taxon>Staphylococcaceae</taxon>
        <taxon>Staphylococcus</taxon>
    </lineage>
</organism>
<feature type="chain" id="PRO_0000172405" description="Large ribosomal subunit protein bL32">
    <location>
        <begin position="1"/>
        <end position="57"/>
    </location>
</feature>
<name>RL32_STAAR</name>
<accession>Q6GHV8</accession>
<proteinExistence type="inferred from homology"/>
<dbReference type="EMBL" id="BX571856">
    <property type="protein sequence ID" value="CAG40103.1"/>
    <property type="molecule type" value="Genomic_DNA"/>
</dbReference>
<dbReference type="RefSeq" id="WP_000290472.1">
    <property type="nucleotide sequence ID" value="NC_002952.2"/>
</dbReference>
<dbReference type="SMR" id="Q6GHV8"/>
<dbReference type="GeneID" id="98345444"/>
<dbReference type="KEGG" id="sar:SAR1101"/>
<dbReference type="HOGENOM" id="CLU_129084_1_3_9"/>
<dbReference type="Proteomes" id="UP000000596">
    <property type="component" value="Chromosome"/>
</dbReference>
<dbReference type="GO" id="GO:0015934">
    <property type="term" value="C:large ribosomal subunit"/>
    <property type="evidence" value="ECO:0007669"/>
    <property type="project" value="InterPro"/>
</dbReference>
<dbReference type="GO" id="GO:0003735">
    <property type="term" value="F:structural constituent of ribosome"/>
    <property type="evidence" value="ECO:0007669"/>
    <property type="project" value="InterPro"/>
</dbReference>
<dbReference type="GO" id="GO:0006412">
    <property type="term" value="P:translation"/>
    <property type="evidence" value="ECO:0007669"/>
    <property type="project" value="UniProtKB-UniRule"/>
</dbReference>
<dbReference type="Gene3D" id="1.20.5.640">
    <property type="entry name" value="Single helix bin"/>
    <property type="match status" value="1"/>
</dbReference>
<dbReference type="HAMAP" id="MF_00340">
    <property type="entry name" value="Ribosomal_bL32"/>
    <property type="match status" value="1"/>
</dbReference>
<dbReference type="InterPro" id="IPR002677">
    <property type="entry name" value="Ribosomal_bL32"/>
</dbReference>
<dbReference type="InterPro" id="IPR044957">
    <property type="entry name" value="Ribosomal_bL32_bact"/>
</dbReference>
<dbReference type="InterPro" id="IPR011332">
    <property type="entry name" value="Ribosomal_zn-bd"/>
</dbReference>
<dbReference type="NCBIfam" id="TIGR01031">
    <property type="entry name" value="rpmF_bact"/>
    <property type="match status" value="1"/>
</dbReference>
<dbReference type="PANTHER" id="PTHR35534">
    <property type="entry name" value="50S RIBOSOMAL PROTEIN L32"/>
    <property type="match status" value="1"/>
</dbReference>
<dbReference type="PANTHER" id="PTHR35534:SF2">
    <property type="entry name" value="LARGE RIBOSOMAL SUBUNIT PROTEIN BL32"/>
    <property type="match status" value="1"/>
</dbReference>
<dbReference type="Pfam" id="PF01783">
    <property type="entry name" value="Ribosomal_L32p"/>
    <property type="match status" value="1"/>
</dbReference>
<dbReference type="SUPFAM" id="SSF57829">
    <property type="entry name" value="Zn-binding ribosomal proteins"/>
    <property type="match status" value="1"/>
</dbReference>
<protein>
    <recommendedName>
        <fullName evidence="1">Large ribosomal subunit protein bL32</fullName>
    </recommendedName>
    <alternativeName>
        <fullName evidence="2">50S ribosomal protein L32</fullName>
    </alternativeName>
</protein>
<reference key="1">
    <citation type="journal article" date="2004" name="Proc. Natl. Acad. Sci. U.S.A.">
        <title>Complete genomes of two clinical Staphylococcus aureus strains: evidence for the rapid evolution of virulence and drug resistance.</title>
        <authorList>
            <person name="Holden M.T.G."/>
            <person name="Feil E.J."/>
            <person name="Lindsay J.A."/>
            <person name="Peacock S.J."/>
            <person name="Day N.P.J."/>
            <person name="Enright M.C."/>
            <person name="Foster T.J."/>
            <person name="Moore C.E."/>
            <person name="Hurst L."/>
            <person name="Atkin R."/>
            <person name="Barron A."/>
            <person name="Bason N."/>
            <person name="Bentley S.D."/>
            <person name="Chillingworth C."/>
            <person name="Chillingworth T."/>
            <person name="Churcher C."/>
            <person name="Clark L."/>
            <person name="Corton C."/>
            <person name="Cronin A."/>
            <person name="Doggett J."/>
            <person name="Dowd L."/>
            <person name="Feltwell T."/>
            <person name="Hance Z."/>
            <person name="Harris B."/>
            <person name="Hauser H."/>
            <person name="Holroyd S."/>
            <person name="Jagels K."/>
            <person name="James K.D."/>
            <person name="Lennard N."/>
            <person name="Line A."/>
            <person name="Mayes R."/>
            <person name="Moule S."/>
            <person name="Mungall K."/>
            <person name="Ormond D."/>
            <person name="Quail M.A."/>
            <person name="Rabbinowitsch E."/>
            <person name="Rutherford K.M."/>
            <person name="Sanders M."/>
            <person name="Sharp S."/>
            <person name="Simmonds M."/>
            <person name="Stevens K."/>
            <person name="Whitehead S."/>
            <person name="Barrell B.G."/>
            <person name="Spratt B.G."/>
            <person name="Parkhill J."/>
        </authorList>
    </citation>
    <scope>NUCLEOTIDE SEQUENCE [LARGE SCALE GENOMIC DNA]</scope>
    <source>
        <strain>MRSA252</strain>
    </source>
</reference>